<comment type="function">
    <text evidence="1">Plays an important role in the de novo pathway of purine nucleotide biosynthesis. Catalyzes the first committed step in the biosynthesis of AMP from IMP.</text>
</comment>
<comment type="catalytic activity">
    <reaction evidence="1">
        <text>IMP + L-aspartate + GTP = N(6)-(1,2-dicarboxyethyl)-AMP + GDP + phosphate + 2 H(+)</text>
        <dbReference type="Rhea" id="RHEA:15753"/>
        <dbReference type="ChEBI" id="CHEBI:15378"/>
        <dbReference type="ChEBI" id="CHEBI:29991"/>
        <dbReference type="ChEBI" id="CHEBI:37565"/>
        <dbReference type="ChEBI" id="CHEBI:43474"/>
        <dbReference type="ChEBI" id="CHEBI:57567"/>
        <dbReference type="ChEBI" id="CHEBI:58053"/>
        <dbReference type="ChEBI" id="CHEBI:58189"/>
        <dbReference type="EC" id="6.3.4.4"/>
    </reaction>
</comment>
<comment type="cofactor">
    <cofactor evidence="1">
        <name>Mg(2+)</name>
        <dbReference type="ChEBI" id="CHEBI:18420"/>
    </cofactor>
    <text evidence="1">Binds 1 Mg(2+) ion per subunit.</text>
</comment>
<comment type="pathway">
    <text evidence="1">Purine metabolism; AMP biosynthesis via de novo pathway; AMP from IMP: step 1/2.</text>
</comment>
<comment type="subunit">
    <text evidence="1">Homodimer.</text>
</comment>
<comment type="subcellular location">
    <subcellularLocation>
        <location evidence="1">Cytoplasm</location>
    </subcellularLocation>
</comment>
<comment type="similarity">
    <text evidence="1">Belongs to the adenylosuccinate synthetase family.</text>
</comment>
<proteinExistence type="inferred from homology"/>
<keyword id="KW-0963">Cytoplasm</keyword>
<keyword id="KW-0342">GTP-binding</keyword>
<keyword id="KW-0436">Ligase</keyword>
<keyword id="KW-0460">Magnesium</keyword>
<keyword id="KW-0479">Metal-binding</keyword>
<keyword id="KW-0547">Nucleotide-binding</keyword>
<keyword id="KW-0658">Purine biosynthesis</keyword>
<accession>B2I7V8</accession>
<dbReference type="EC" id="6.3.4.4" evidence="1"/>
<dbReference type="EMBL" id="CP001011">
    <property type="protein sequence ID" value="ACB93123.1"/>
    <property type="molecule type" value="Genomic_DNA"/>
</dbReference>
<dbReference type="RefSeq" id="WP_004089785.1">
    <property type="nucleotide sequence ID" value="NC_010577.1"/>
</dbReference>
<dbReference type="SMR" id="B2I7V8"/>
<dbReference type="KEGG" id="xfn:XfasM23_1719"/>
<dbReference type="HOGENOM" id="CLU_029848_0_0_6"/>
<dbReference type="UniPathway" id="UPA00075">
    <property type="reaction ID" value="UER00335"/>
</dbReference>
<dbReference type="Proteomes" id="UP000001698">
    <property type="component" value="Chromosome"/>
</dbReference>
<dbReference type="GO" id="GO:0005737">
    <property type="term" value="C:cytoplasm"/>
    <property type="evidence" value="ECO:0007669"/>
    <property type="project" value="UniProtKB-SubCell"/>
</dbReference>
<dbReference type="GO" id="GO:0004019">
    <property type="term" value="F:adenylosuccinate synthase activity"/>
    <property type="evidence" value="ECO:0007669"/>
    <property type="project" value="UniProtKB-UniRule"/>
</dbReference>
<dbReference type="GO" id="GO:0005525">
    <property type="term" value="F:GTP binding"/>
    <property type="evidence" value="ECO:0007669"/>
    <property type="project" value="UniProtKB-UniRule"/>
</dbReference>
<dbReference type="GO" id="GO:0000287">
    <property type="term" value="F:magnesium ion binding"/>
    <property type="evidence" value="ECO:0007669"/>
    <property type="project" value="UniProtKB-UniRule"/>
</dbReference>
<dbReference type="GO" id="GO:0044208">
    <property type="term" value="P:'de novo' AMP biosynthetic process"/>
    <property type="evidence" value="ECO:0007669"/>
    <property type="project" value="UniProtKB-UniRule"/>
</dbReference>
<dbReference type="GO" id="GO:0046040">
    <property type="term" value="P:IMP metabolic process"/>
    <property type="evidence" value="ECO:0007669"/>
    <property type="project" value="TreeGrafter"/>
</dbReference>
<dbReference type="CDD" id="cd03108">
    <property type="entry name" value="AdSS"/>
    <property type="match status" value="1"/>
</dbReference>
<dbReference type="FunFam" id="1.10.300.10:FF:000001">
    <property type="entry name" value="Adenylosuccinate synthetase"/>
    <property type="match status" value="1"/>
</dbReference>
<dbReference type="FunFam" id="3.90.170.10:FF:000001">
    <property type="entry name" value="Adenylosuccinate synthetase"/>
    <property type="match status" value="1"/>
</dbReference>
<dbReference type="Gene3D" id="3.40.440.10">
    <property type="entry name" value="Adenylosuccinate Synthetase, subunit A, domain 1"/>
    <property type="match status" value="1"/>
</dbReference>
<dbReference type="Gene3D" id="1.10.300.10">
    <property type="entry name" value="Adenylosuccinate Synthetase, subunit A, domain 2"/>
    <property type="match status" value="1"/>
</dbReference>
<dbReference type="Gene3D" id="3.90.170.10">
    <property type="entry name" value="Adenylosuccinate Synthetase, subunit A, domain 3"/>
    <property type="match status" value="1"/>
</dbReference>
<dbReference type="HAMAP" id="MF_00011">
    <property type="entry name" value="Adenylosucc_synth"/>
    <property type="match status" value="1"/>
</dbReference>
<dbReference type="InterPro" id="IPR018220">
    <property type="entry name" value="Adenylosuccin_syn_GTP-bd"/>
</dbReference>
<dbReference type="InterPro" id="IPR033128">
    <property type="entry name" value="Adenylosuccin_syn_Lys_AS"/>
</dbReference>
<dbReference type="InterPro" id="IPR042109">
    <property type="entry name" value="Adenylosuccinate_synth_dom1"/>
</dbReference>
<dbReference type="InterPro" id="IPR042110">
    <property type="entry name" value="Adenylosuccinate_synth_dom2"/>
</dbReference>
<dbReference type="InterPro" id="IPR042111">
    <property type="entry name" value="Adenylosuccinate_synth_dom3"/>
</dbReference>
<dbReference type="InterPro" id="IPR001114">
    <property type="entry name" value="Adenylosuccinate_synthetase"/>
</dbReference>
<dbReference type="InterPro" id="IPR027417">
    <property type="entry name" value="P-loop_NTPase"/>
</dbReference>
<dbReference type="NCBIfam" id="NF002223">
    <property type="entry name" value="PRK01117.1"/>
    <property type="match status" value="1"/>
</dbReference>
<dbReference type="NCBIfam" id="TIGR00184">
    <property type="entry name" value="purA"/>
    <property type="match status" value="1"/>
</dbReference>
<dbReference type="PANTHER" id="PTHR11846">
    <property type="entry name" value="ADENYLOSUCCINATE SYNTHETASE"/>
    <property type="match status" value="1"/>
</dbReference>
<dbReference type="PANTHER" id="PTHR11846:SF0">
    <property type="entry name" value="ADENYLOSUCCINATE SYNTHETASE"/>
    <property type="match status" value="1"/>
</dbReference>
<dbReference type="Pfam" id="PF00709">
    <property type="entry name" value="Adenylsucc_synt"/>
    <property type="match status" value="1"/>
</dbReference>
<dbReference type="SMART" id="SM00788">
    <property type="entry name" value="Adenylsucc_synt"/>
    <property type="match status" value="1"/>
</dbReference>
<dbReference type="SUPFAM" id="SSF52540">
    <property type="entry name" value="P-loop containing nucleoside triphosphate hydrolases"/>
    <property type="match status" value="1"/>
</dbReference>
<dbReference type="PROSITE" id="PS01266">
    <property type="entry name" value="ADENYLOSUCCIN_SYN_1"/>
    <property type="match status" value="1"/>
</dbReference>
<dbReference type="PROSITE" id="PS00513">
    <property type="entry name" value="ADENYLOSUCCIN_SYN_2"/>
    <property type="match status" value="1"/>
</dbReference>
<feature type="chain" id="PRO_1000089354" description="Adenylosuccinate synthetase">
    <location>
        <begin position="1"/>
        <end position="430"/>
    </location>
</feature>
<feature type="active site" description="Proton acceptor" evidence="1">
    <location>
        <position position="14"/>
    </location>
</feature>
<feature type="active site" description="Proton donor" evidence="1">
    <location>
        <position position="42"/>
    </location>
</feature>
<feature type="binding site" evidence="1">
    <location>
        <begin position="13"/>
        <end position="19"/>
    </location>
    <ligand>
        <name>GTP</name>
        <dbReference type="ChEBI" id="CHEBI:37565"/>
    </ligand>
</feature>
<feature type="binding site" description="in other chain" evidence="1">
    <location>
        <begin position="14"/>
        <end position="17"/>
    </location>
    <ligand>
        <name>IMP</name>
        <dbReference type="ChEBI" id="CHEBI:58053"/>
        <note>ligand shared between dimeric partners</note>
    </ligand>
</feature>
<feature type="binding site" evidence="1">
    <location>
        <position position="14"/>
    </location>
    <ligand>
        <name>Mg(2+)</name>
        <dbReference type="ChEBI" id="CHEBI:18420"/>
    </ligand>
</feature>
<feature type="binding site" description="in other chain" evidence="1">
    <location>
        <begin position="39"/>
        <end position="42"/>
    </location>
    <ligand>
        <name>IMP</name>
        <dbReference type="ChEBI" id="CHEBI:58053"/>
        <note>ligand shared between dimeric partners</note>
    </ligand>
</feature>
<feature type="binding site" evidence="1">
    <location>
        <begin position="41"/>
        <end position="43"/>
    </location>
    <ligand>
        <name>GTP</name>
        <dbReference type="ChEBI" id="CHEBI:37565"/>
    </ligand>
</feature>
<feature type="binding site" evidence="1">
    <location>
        <position position="41"/>
    </location>
    <ligand>
        <name>Mg(2+)</name>
        <dbReference type="ChEBI" id="CHEBI:18420"/>
    </ligand>
</feature>
<feature type="binding site" description="in other chain" evidence="1">
    <location>
        <position position="130"/>
    </location>
    <ligand>
        <name>IMP</name>
        <dbReference type="ChEBI" id="CHEBI:58053"/>
        <note>ligand shared between dimeric partners</note>
    </ligand>
</feature>
<feature type="binding site" evidence="1">
    <location>
        <position position="144"/>
    </location>
    <ligand>
        <name>IMP</name>
        <dbReference type="ChEBI" id="CHEBI:58053"/>
        <note>ligand shared between dimeric partners</note>
    </ligand>
</feature>
<feature type="binding site" description="in other chain" evidence="1">
    <location>
        <position position="225"/>
    </location>
    <ligand>
        <name>IMP</name>
        <dbReference type="ChEBI" id="CHEBI:58053"/>
        <note>ligand shared between dimeric partners</note>
    </ligand>
</feature>
<feature type="binding site" description="in other chain" evidence="1">
    <location>
        <position position="240"/>
    </location>
    <ligand>
        <name>IMP</name>
        <dbReference type="ChEBI" id="CHEBI:58053"/>
        <note>ligand shared between dimeric partners</note>
    </ligand>
</feature>
<feature type="binding site" evidence="1">
    <location>
        <begin position="300"/>
        <end position="306"/>
    </location>
    <ligand>
        <name>substrate</name>
    </ligand>
</feature>
<feature type="binding site" description="in other chain" evidence="1">
    <location>
        <position position="304"/>
    </location>
    <ligand>
        <name>IMP</name>
        <dbReference type="ChEBI" id="CHEBI:58053"/>
        <note>ligand shared between dimeric partners</note>
    </ligand>
</feature>
<feature type="binding site" evidence="1">
    <location>
        <position position="306"/>
    </location>
    <ligand>
        <name>GTP</name>
        <dbReference type="ChEBI" id="CHEBI:37565"/>
    </ligand>
</feature>
<feature type="binding site" evidence="1">
    <location>
        <begin position="332"/>
        <end position="334"/>
    </location>
    <ligand>
        <name>GTP</name>
        <dbReference type="ChEBI" id="CHEBI:37565"/>
    </ligand>
</feature>
<feature type="binding site" evidence="1">
    <location>
        <begin position="414"/>
        <end position="416"/>
    </location>
    <ligand>
        <name>GTP</name>
        <dbReference type="ChEBI" id="CHEBI:37565"/>
    </ligand>
</feature>
<reference key="1">
    <citation type="journal article" date="2010" name="J. Bacteriol.">
        <title>Whole genome sequences of two Xylella fastidiosa strains (M12 and M23) causing almond leaf scorch disease in California.</title>
        <authorList>
            <person name="Chen J."/>
            <person name="Xie G."/>
            <person name="Han S."/>
            <person name="Chertkov O."/>
            <person name="Sims D."/>
            <person name="Civerolo E.L."/>
        </authorList>
    </citation>
    <scope>NUCLEOTIDE SEQUENCE [LARGE SCALE GENOMIC DNA]</scope>
    <source>
        <strain>M23</strain>
    </source>
</reference>
<name>PURA_XYLF2</name>
<organism>
    <name type="scientific">Xylella fastidiosa (strain M23)</name>
    <dbReference type="NCBI Taxonomy" id="405441"/>
    <lineage>
        <taxon>Bacteria</taxon>
        <taxon>Pseudomonadati</taxon>
        <taxon>Pseudomonadota</taxon>
        <taxon>Gammaproteobacteria</taxon>
        <taxon>Lysobacterales</taxon>
        <taxon>Lysobacteraceae</taxon>
        <taxon>Xylella</taxon>
    </lineage>
</organism>
<evidence type="ECO:0000255" key="1">
    <source>
        <dbReference type="HAMAP-Rule" id="MF_00011"/>
    </source>
</evidence>
<gene>
    <name evidence="1" type="primary">purA</name>
    <name type="ordered locus">XfasM23_1719</name>
</gene>
<protein>
    <recommendedName>
        <fullName evidence="1">Adenylosuccinate synthetase</fullName>
        <shortName evidence="1">AMPSase</shortName>
        <shortName evidence="1">AdSS</shortName>
        <ecNumber evidence="1">6.3.4.4</ecNumber>
    </recommendedName>
    <alternativeName>
        <fullName evidence="1">IMP--aspartate ligase</fullName>
    </alternativeName>
</protein>
<sequence>MGQSVVVLGAQWGDEGKGKIVDLLTEEIGAVVRFQGGHNAGHTLVINAKKTVLHLIPSGILRNGVLCLIGNGVVISPAALRKEIEELEDTGLEIRSRLKISPAAPLIMEYHIALDQAREKAAGGRAIGTTGRGIGPAYEDKVGRRGIRVADLHYPDQLAEKLRAALDYHNFVLTRYFGVDGMDFQRIYDEMLVFAEYVEPMKSDVAGILHDLRKQGKRVLFEGAQGTLLDIDHGTYPYVTSSSTTVGGALSGAGVGVQDIDYVLGIAKAYATRVGGGPFPTELDDKIGQGIRDRGVEYGASTGRPRRCGWMDIVALKRAVAINGITGLCITKLDVLDGMDKLKICIAYEYHDKRSEYAPLDAQGWEECTPVYLEFPGWNESTHGITSWEKLPPAARAYLCALEELAGCPIGIVSTGPDREHTIMLHDPFA</sequence>